<feature type="chain" id="PRO_0000086493" description="Cyclin-dependent kinase 18">
    <location>
        <begin position="1"/>
        <end position="451"/>
    </location>
</feature>
<feature type="domain" description="Protein kinase" evidence="2">
    <location>
        <begin position="121"/>
        <end position="402"/>
    </location>
</feature>
<feature type="region of interest" description="Disordered" evidence="4">
    <location>
        <begin position="39"/>
        <end position="61"/>
    </location>
</feature>
<feature type="compositionally biased region" description="Polar residues" evidence="4">
    <location>
        <begin position="52"/>
        <end position="61"/>
    </location>
</feature>
<feature type="active site" description="Proton acceptor" evidence="2 3">
    <location>
        <position position="242"/>
    </location>
</feature>
<feature type="binding site" evidence="2">
    <location>
        <begin position="127"/>
        <end position="135"/>
    </location>
    <ligand>
        <name>ATP</name>
        <dbReference type="ChEBI" id="CHEBI:30616"/>
    </ligand>
</feature>
<feature type="binding site" evidence="2">
    <location>
        <position position="150"/>
    </location>
    <ligand>
        <name>ATP</name>
        <dbReference type="ChEBI" id="CHEBI:30616"/>
    </ligand>
</feature>
<feature type="modified residue" description="Phosphoserine" evidence="6 7">
    <location>
        <position position="51"/>
    </location>
</feature>
<feature type="modified residue" description="Phosphoserine" evidence="6 7">
    <location>
        <position position="66"/>
    </location>
</feature>
<feature type="modified residue" description="Phosphoserine" evidence="1">
    <location>
        <position position="109"/>
    </location>
</feature>
<feature type="modified residue" description="Phosphoserine" evidence="7">
    <location>
        <position position="417"/>
    </location>
</feature>
<feature type="modified residue" description="Phosphoserine" evidence="7">
    <location>
        <position position="420"/>
    </location>
</feature>
<accession>O35832</accession>
<evidence type="ECO:0000250" key="1">
    <source>
        <dbReference type="UniProtKB" id="Q04899"/>
    </source>
</evidence>
<evidence type="ECO:0000255" key="2">
    <source>
        <dbReference type="PROSITE-ProRule" id="PRU00159"/>
    </source>
</evidence>
<evidence type="ECO:0000255" key="3">
    <source>
        <dbReference type="PROSITE-ProRule" id="PRU10027"/>
    </source>
</evidence>
<evidence type="ECO:0000256" key="4">
    <source>
        <dbReference type="SAM" id="MobiDB-lite"/>
    </source>
</evidence>
<evidence type="ECO:0000305" key="5"/>
<evidence type="ECO:0007744" key="6">
    <source>
    </source>
</evidence>
<evidence type="ECO:0007744" key="7">
    <source>
    </source>
</evidence>
<organism>
    <name type="scientific">Rattus norvegicus</name>
    <name type="common">Rat</name>
    <dbReference type="NCBI Taxonomy" id="10116"/>
    <lineage>
        <taxon>Eukaryota</taxon>
        <taxon>Metazoa</taxon>
        <taxon>Chordata</taxon>
        <taxon>Craniata</taxon>
        <taxon>Vertebrata</taxon>
        <taxon>Euteleostomi</taxon>
        <taxon>Mammalia</taxon>
        <taxon>Eutheria</taxon>
        <taxon>Euarchontoglires</taxon>
        <taxon>Glires</taxon>
        <taxon>Rodentia</taxon>
        <taxon>Myomorpha</taxon>
        <taxon>Muroidea</taxon>
        <taxon>Muridae</taxon>
        <taxon>Murinae</taxon>
        <taxon>Rattus</taxon>
    </lineage>
</organism>
<protein>
    <recommendedName>
        <fullName>Cyclin-dependent kinase 18</fullName>
        <ecNumber>2.7.11.22</ecNumber>
    </recommendedName>
    <alternativeName>
        <fullName>Cell division protein kinase 18</fullName>
    </alternativeName>
    <alternativeName>
        <fullName>PCTAIRE-motif protein kinase 3</fullName>
    </alternativeName>
    <alternativeName>
        <fullName>Serine/threonine-protein kinase PCTAIRE-3</fullName>
    </alternativeName>
</protein>
<reference key="1">
    <citation type="journal article" date="1997" name="Eur. J. Biochem.">
        <title>PCTAIRE 2, a Cdc2-related serine/threonine kinase, is predominantly expressed in terminally differentiated neurons.</title>
        <authorList>
            <person name="Hirose T."/>
            <person name="Tamaru T."/>
            <person name="Okumura N."/>
            <person name="Nagai K."/>
            <person name="Okada M."/>
        </authorList>
    </citation>
    <scope>NUCLEOTIDE SEQUENCE [MRNA]</scope>
</reference>
<reference key="2">
    <citation type="journal article" date="2006" name="Proc. Natl. Acad. Sci. U.S.A.">
        <title>Quantitative phosphoproteomics of vasopressin-sensitive renal cells: regulation of aquaporin-2 phosphorylation at two sites.</title>
        <authorList>
            <person name="Hoffert J.D."/>
            <person name="Pisitkun T."/>
            <person name="Wang G."/>
            <person name="Shen R.-F."/>
            <person name="Knepper M.A."/>
        </authorList>
    </citation>
    <scope>PHOSPHORYLATION [LARGE SCALE ANALYSIS] AT SER-51 AND SER-66</scope>
    <scope>IDENTIFICATION BY MASS SPECTROMETRY [LARGE SCALE ANALYSIS]</scope>
</reference>
<reference key="3">
    <citation type="journal article" date="2012" name="Nat. Commun.">
        <title>Quantitative maps of protein phosphorylation sites across 14 different rat organs and tissues.</title>
        <authorList>
            <person name="Lundby A."/>
            <person name="Secher A."/>
            <person name="Lage K."/>
            <person name="Nordsborg N.B."/>
            <person name="Dmytriyev A."/>
            <person name="Lundby C."/>
            <person name="Olsen J.V."/>
        </authorList>
    </citation>
    <scope>PHOSPHORYLATION [LARGE SCALE ANALYSIS] AT SER-51; SER-66; SER-417 AND SER-420</scope>
    <scope>IDENTIFICATION BY MASS SPECTROMETRY [LARGE SCALE ANALYSIS]</scope>
</reference>
<dbReference type="EC" id="2.7.11.22"/>
<dbReference type="EMBL" id="AB005541">
    <property type="protein sequence ID" value="BAA21472.1"/>
    <property type="molecule type" value="mRNA"/>
</dbReference>
<dbReference type="RefSeq" id="NP_001093976.1">
    <property type="nucleotide sequence ID" value="NM_001100506.1"/>
</dbReference>
<dbReference type="RefSeq" id="XP_006249813.1">
    <property type="nucleotide sequence ID" value="XM_006249751.5"/>
</dbReference>
<dbReference type="RefSeq" id="XP_063128140.1">
    <property type="nucleotide sequence ID" value="XM_063272070.1"/>
</dbReference>
<dbReference type="RefSeq" id="XP_063128141.1">
    <property type="nucleotide sequence ID" value="XM_063272071.1"/>
</dbReference>
<dbReference type="SMR" id="O35832"/>
<dbReference type="FunCoup" id="O35832">
    <property type="interactions" value="467"/>
</dbReference>
<dbReference type="STRING" id="10116.ENSRNOP00000010976"/>
<dbReference type="iPTMnet" id="O35832"/>
<dbReference type="PhosphoSitePlus" id="O35832"/>
<dbReference type="jPOST" id="O35832"/>
<dbReference type="PaxDb" id="10116-ENSRNOP00000010976"/>
<dbReference type="GeneID" id="289019"/>
<dbReference type="KEGG" id="rno:289019"/>
<dbReference type="UCSC" id="RGD:1309523">
    <property type="organism name" value="rat"/>
</dbReference>
<dbReference type="AGR" id="RGD:1309523"/>
<dbReference type="CTD" id="5129"/>
<dbReference type="RGD" id="1309523">
    <property type="gene designation" value="Cdk18"/>
</dbReference>
<dbReference type="eggNOG" id="KOG0594">
    <property type="taxonomic scope" value="Eukaryota"/>
</dbReference>
<dbReference type="HOGENOM" id="CLU_000288_154_3_1"/>
<dbReference type="InParanoid" id="O35832"/>
<dbReference type="PhylomeDB" id="O35832"/>
<dbReference type="TreeFam" id="TF106508"/>
<dbReference type="BRENDA" id="2.7.11.22">
    <property type="organism ID" value="5301"/>
</dbReference>
<dbReference type="PRO" id="PR:O35832"/>
<dbReference type="Proteomes" id="UP000002494">
    <property type="component" value="Unplaced"/>
</dbReference>
<dbReference type="GO" id="GO:0005737">
    <property type="term" value="C:cytoplasm"/>
    <property type="evidence" value="ECO:0000318"/>
    <property type="project" value="GO_Central"/>
</dbReference>
<dbReference type="GO" id="GO:0005634">
    <property type="term" value="C:nucleus"/>
    <property type="evidence" value="ECO:0000318"/>
    <property type="project" value="GO_Central"/>
</dbReference>
<dbReference type="GO" id="GO:0005524">
    <property type="term" value="F:ATP binding"/>
    <property type="evidence" value="ECO:0007669"/>
    <property type="project" value="UniProtKB-KW"/>
</dbReference>
<dbReference type="GO" id="GO:0004693">
    <property type="term" value="F:cyclin-dependent protein serine/threonine kinase activity"/>
    <property type="evidence" value="ECO:0000318"/>
    <property type="project" value="GO_Central"/>
</dbReference>
<dbReference type="GO" id="GO:0106310">
    <property type="term" value="F:protein serine kinase activity"/>
    <property type="evidence" value="ECO:0007669"/>
    <property type="project" value="RHEA"/>
</dbReference>
<dbReference type="GO" id="GO:0031643">
    <property type="term" value="P:positive regulation of myelination"/>
    <property type="evidence" value="ECO:0000266"/>
    <property type="project" value="RGD"/>
</dbReference>
<dbReference type="GO" id="GO:1901987">
    <property type="term" value="P:regulation of cell cycle phase transition"/>
    <property type="evidence" value="ECO:0000318"/>
    <property type="project" value="GO_Central"/>
</dbReference>
<dbReference type="FunFam" id="3.30.200.20:FF:000007">
    <property type="entry name" value="Cyclin-dependent kinase 14, putative"/>
    <property type="match status" value="1"/>
</dbReference>
<dbReference type="FunFam" id="1.10.510.10:FF:000061">
    <property type="entry name" value="Putative cyclin-dependent kinase 17"/>
    <property type="match status" value="1"/>
</dbReference>
<dbReference type="Gene3D" id="3.30.200.20">
    <property type="entry name" value="Phosphorylase Kinase, domain 1"/>
    <property type="match status" value="1"/>
</dbReference>
<dbReference type="Gene3D" id="1.10.510.10">
    <property type="entry name" value="Transferase(Phosphotransferase) domain 1"/>
    <property type="match status" value="1"/>
</dbReference>
<dbReference type="InterPro" id="IPR050108">
    <property type="entry name" value="CDK"/>
</dbReference>
<dbReference type="InterPro" id="IPR011009">
    <property type="entry name" value="Kinase-like_dom_sf"/>
</dbReference>
<dbReference type="InterPro" id="IPR000719">
    <property type="entry name" value="Prot_kinase_dom"/>
</dbReference>
<dbReference type="InterPro" id="IPR017441">
    <property type="entry name" value="Protein_kinase_ATP_BS"/>
</dbReference>
<dbReference type="InterPro" id="IPR008271">
    <property type="entry name" value="Ser/Thr_kinase_AS"/>
</dbReference>
<dbReference type="PANTHER" id="PTHR24056">
    <property type="entry name" value="CELL DIVISION PROTEIN KINASE"/>
    <property type="match status" value="1"/>
</dbReference>
<dbReference type="PANTHER" id="PTHR24056:SF52">
    <property type="entry name" value="CYCLIN-DEPENDENT KINASE 18"/>
    <property type="match status" value="1"/>
</dbReference>
<dbReference type="Pfam" id="PF00069">
    <property type="entry name" value="Pkinase"/>
    <property type="match status" value="1"/>
</dbReference>
<dbReference type="SMART" id="SM00220">
    <property type="entry name" value="S_TKc"/>
    <property type="match status" value="1"/>
</dbReference>
<dbReference type="SUPFAM" id="SSF56112">
    <property type="entry name" value="Protein kinase-like (PK-like)"/>
    <property type="match status" value="1"/>
</dbReference>
<dbReference type="PROSITE" id="PS00107">
    <property type="entry name" value="PROTEIN_KINASE_ATP"/>
    <property type="match status" value="1"/>
</dbReference>
<dbReference type="PROSITE" id="PS50011">
    <property type="entry name" value="PROTEIN_KINASE_DOM"/>
    <property type="match status" value="1"/>
</dbReference>
<dbReference type="PROSITE" id="PS00108">
    <property type="entry name" value="PROTEIN_KINASE_ST"/>
    <property type="match status" value="1"/>
</dbReference>
<name>CDK18_RAT</name>
<gene>
    <name type="primary">Cdk18</name>
    <name type="synonym">Pctaire3</name>
    <name type="synonym">Pctk3</name>
</gene>
<keyword id="KW-0067">ATP-binding</keyword>
<keyword id="KW-0418">Kinase</keyword>
<keyword id="KW-0547">Nucleotide-binding</keyword>
<keyword id="KW-0597">Phosphoprotein</keyword>
<keyword id="KW-1185">Reference proteome</keyword>
<keyword id="KW-0723">Serine/threonine-protein kinase</keyword>
<keyword id="KW-0808">Transferase</keyword>
<sequence length="451" mass="51882">MNKMKNFKRRLSLSVPRPETIEESLTEFTEQFNQLHTQRNEDGRDEPGQLSPGVQYQQRQNQRRFSMEDLNKRLSLPMDIRLPQEFLQKLQLENPGLPKPLTRMSRRASLSDIGFGKLETYVKLDKLGEGTYATVFKGRSKLTENLVALKEIRLEHEEGAPCTAIREVSLLKDLKHANIVTLHDLIHTDRSLTLVFEYLDSDLKQYLDHCGNLMNMHNVKIFMFQLLRGLAYCHRRKILHRDLKPQNLLINERGELKLADFGLARAKSVPTKTYSNEVVTLWYRPPDVLLGSTEYSTPIDMWGVGCILYEMATGKPLFPGSTVKEELHLIFRLLGTPTEESWPGVTSISEFRAYNFPRYLPQPLLSHAPRLDTEGINLLTSLLLYESKSRMSAEAALSHPYFQSLGERVHQLDDTASIFSLKEIQLQKDPGYRGLAFQHPGRGKSRRQSIF</sequence>
<comment type="function">
    <text>May play a role in signal transduction cascades in terminally differentiated cells.</text>
</comment>
<comment type="catalytic activity">
    <reaction>
        <text>L-seryl-[protein] + ATP = O-phospho-L-seryl-[protein] + ADP + H(+)</text>
        <dbReference type="Rhea" id="RHEA:17989"/>
        <dbReference type="Rhea" id="RHEA-COMP:9863"/>
        <dbReference type="Rhea" id="RHEA-COMP:11604"/>
        <dbReference type="ChEBI" id="CHEBI:15378"/>
        <dbReference type="ChEBI" id="CHEBI:29999"/>
        <dbReference type="ChEBI" id="CHEBI:30616"/>
        <dbReference type="ChEBI" id="CHEBI:83421"/>
        <dbReference type="ChEBI" id="CHEBI:456216"/>
        <dbReference type="EC" id="2.7.11.22"/>
    </reaction>
</comment>
<comment type="catalytic activity">
    <reaction>
        <text>L-threonyl-[protein] + ATP = O-phospho-L-threonyl-[protein] + ADP + H(+)</text>
        <dbReference type="Rhea" id="RHEA:46608"/>
        <dbReference type="Rhea" id="RHEA-COMP:11060"/>
        <dbReference type="Rhea" id="RHEA-COMP:11605"/>
        <dbReference type="ChEBI" id="CHEBI:15378"/>
        <dbReference type="ChEBI" id="CHEBI:30013"/>
        <dbReference type="ChEBI" id="CHEBI:30616"/>
        <dbReference type="ChEBI" id="CHEBI:61977"/>
        <dbReference type="ChEBI" id="CHEBI:456216"/>
        <dbReference type="EC" id="2.7.11.22"/>
    </reaction>
</comment>
<comment type="tissue specificity">
    <text>In brain, kidney, intestine and at a much lower level, in fetal tissues.</text>
</comment>
<comment type="similarity">
    <text evidence="5">Belongs to the protein kinase superfamily. CMGC Ser/Thr protein kinase family. CDC2/CDKX subfamily.</text>
</comment>
<proteinExistence type="evidence at protein level"/>